<comment type="function">
    <text>Acts only on small linear 1,5-alpha-linked L-arabinofuranosyl oligosaccharides.</text>
</comment>
<comment type="catalytic activity">
    <reaction>
        <text>Hydrolysis of terminal non-reducing alpha-L-arabinofuranoside residues in alpha-L-arabinosides.</text>
        <dbReference type="EC" id="3.2.1.55"/>
    </reaction>
</comment>
<comment type="pathway">
    <text>Glycan metabolism; L-arabinan degradation.</text>
</comment>
<comment type="similarity">
    <text evidence="3">Belongs to the glycosyl hydrolase 51 family.</text>
</comment>
<gene>
    <name type="primary">abfA</name>
</gene>
<protein>
    <recommendedName>
        <fullName>Alpha-L-arabinofuranosidase A</fullName>
        <shortName>ABF A</shortName>
        <shortName>Arabinosidase A</shortName>
        <ecNumber>3.2.1.55</ecNumber>
    </recommendedName>
</protein>
<proteinExistence type="evidence at protein level"/>
<sequence>MVAFSALSGVSAVSLLLSLVQNAHGISLKVSTQGGNSSSPILYGFMFEDINHSGDGGIYGQMLQNPGLQGTAPNLTAWAAVGDATIAIDGDSPLTSAIPSTIKLNIADDATGAVGLTNEGYWGIPVDGSEFHSSFWIKGDYSGDITVRLVGNYTGTEYGSTTITHTSTADNFTQASVKFPTTKAPDGNVLYELTVDGSVAAGSSLNFGYLTLFGETYKSRENGLKPQLANVLDDMKGSFLRFPGGNNLEGNSAENRWKWNETIGDLCDRPGREGTWTYYNTDGLGLHEYFYWCEDLGLVPVLGVWDGFALESGGNTPLTGDALTPYIDDVLNELEYILGDTSTTYGAWRAANGQEEPWNLTMVEIGNEDMLGGGCESYAERFTAFYDAIHAAYPDLILIASTSEADCLPESMPEGSWVDYHDYSTPDGLVGQFNYFDNLNRSVPYFIGEYSRWEIDWPNMKGSVAEAVFMIGFERNSDVVKMAAYAPLLQLINSTQWTPDLIGYTQSPGDIFLSTSYYVQEMFSRNRGDTIKEVTSDSDFGPLYWVASSAGDSYYVKLANYGSETQDLTVSIPGTSTGKLTVLADSDPDAYNSDTQTLVTPSESTVQASNGTFTFSLPAWAVAVLAAN</sequence>
<keyword id="KW-0903">Direct protein sequencing</keyword>
<keyword id="KW-0325">Glycoprotein</keyword>
<keyword id="KW-0326">Glycosidase</keyword>
<keyword id="KW-0378">Hydrolase</keyword>
<keyword id="KW-0732">Signal</keyword>
<reference key="1">
    <citation type="journal article" date="1994" name="Microbiology">
        <title>Arabinase gene expression in Aspergillus niger: indications for coordinated regulation.</title>
        <authorList>
            <person name="Flipphi M.J.A."/>
            <person name="Visser J."/>
            <person name="van der Veen P."/>
            <person name="de Graaff L.H."/>
        </authorList>
    </citation>
    <scope>NUCLEOTIDE SEQUENCE [GENOMIC DNA]</scope>
    <scope>PROTEIN SEQUENCE OF 26-35 AND 63-77</scope>
    <source>
        <strain>ATCC 9029 / NRRL 3 / CBS 120.49 / DSM 2466 / N400 / FGSC 732</strain>
    </source>
</reference>
<name>ABFA_ASPNG</name>
<dbReference type="EC" id="3.2.1.55"/>
<dbReference type="EMBL" id="L29005">
    <property type="protein sequence ID" value="AAC41644.1"/>
    <property type="molecule type" value="Genomic_DNA"/>
</dbReference>
<dbReference type="SMR" id="P42254"/>
<dbReference type="CAZy" id="GH51">
    <property type="family name" value="Glycoside Hydrolase Family 51"/>
</dbReference>
<dbReference type="GlyCosmos" id="P42254">
    <property type="glycosylation" value="10 sites, No reported glycans"/>
</dbReference>
<dbReference type="PaxDb" id="5061-CADANGAP00000030"/>
<dbReference type="VEuPathDB" id="FungiDB:An01g00330"/>
<dbReference type="VEuPathDB" id="FungiDB:ASPNIDRAFT2_1116622"/>
<dbReference type="VEuPathDB" id="FungiDB:ATCC64974_23190"/>
<dbReference type="VEuPathDB" id="FungiDB:M747DRAFT_331887"/>
<dbReference type="eggNOG" id="ENOG502QQEX">
    <property type="taxonomic scope" value="Eukaryota"/>
</dbReference>
<dbReference type="BioCyc" id="MetaCyc:MONOMER-16901"/>
<dbReference type="BRENDA" id="3.2.1.55">
    <property type="organism ID" value="518"/>
</dbReference>
<dbReference type="UniPathway" id="UPA00667"/>
<dbReference type="GO" id="GO:0046556">
    <property type="term" value="F:alpha-L-arabinofuranosidase activity"/>
    <property type="evidence" value="ECO:0007669"/>
    <property type="project" value="UniProtKB-EC"/>
</dbReference>
<dbReference type="GO" id="GO:0031222">
    <property type="term" value="P:arabinan catabolic process"/>
    <property type="evidence" value="ECO:0007669"/>
    <property type="project" value="UniProtKB-UniPathway"/>
</dbReference>
<dbReference type="GO" id="GO:0046373">
    <property type="term" value="P:L-arabinose metabolic process"/>
    <property type="evidence" value="ECO:0007669"/>
    <property type="project" value="InterPro"/>
</dbReference>
<dbReference type="FunFam" id="2.60.40.1180:FF:000036">
    <property type="entry name" value="Probable alpha-L-arabinofuranosidase A"/>
    <property type="match status" value="1"/>
</dbReference>
<dbReference type="FunFam" id="3.20.20.80:FF:000092">
    <property type="entry name" value="Probable alpha-L-arabinofuranosidase A"/>
    <property type="match status" value="1"/>
</dbReference>
<dbReference type="Gene3D" id="3.20.20.80">
    <property type="entry name" value="Glycosidases"/>
    <property type="match status" value="1"/>
</dbReference>
<dbReference type="Gene3D" id="2.60.40.1180">
    <property type="entry name" value="Golgi alpha-mannosidase II"/>
    <property type="match status" value="1"/>
</dbReference>
<dbReference type="InterPro" id="IPR010720">
    <property type="entry name" value="Alpha-L-AF_C"/>
</dbReference>
<dbReference type="InterPro" id="IPR055235">
    <property type="entry name" value="ASD1_cat"/>
</dbReference>
<dbReference type="InterPro" id="IPR013780">
    <property type="entry name" value="Glyco_hydro_b"/>
</dbReference>
<dbReference type="InterPro" id="IPR017853">
    <property type="entry name" value="Glycoside_hydrolase_SF"/>
</dbReference>
<dbReference type="InterPro" id="IPR051563">
    <property type="entry name" value="Glycosyl_Hydrolase_51"/>
</dbReference>
<dbReference type="PANTHER" id="PTHR31776">
    <property type="entry name" value="ALPHA-L-ARABINOFURANOSIDASE 1"/>
    <property type="match status" value="1"/>
</dbReference>
<dbReference type="PANTHER" id="PTHR31776:SF0">
    <property type="entry name" value="ALPHA-L-ARABINOFURANOSIDASE 1"/>
    <property type="match status" value="1"/>
</dbReference>
<dbReference type="Pfam" id="PF06964">
    <property type="entry name" value="Alpha-L-AF_C"/>
    <property type="match status" value="1"/>
</dbReference>
<dbReference type="Pfam" id="PF22848">
    <property type="entry name" value="ASD1_dom"/>
    <property type="match status" value="1"/>
</dbReference>
<dbReference type="SMART" id="SM00813">
    <property type="entry name" value="Alpha-L-AF_C"/>
    <property type="match status" value="1"/>
</dbReference>
<dbReference type="SUPFAM" id="SSF51445">
    <property type="entry name" value="(Trans)glycosidases"/>
    <property type="match status" value="1"/>
</dbReference>
<dbReference type="SUPFAM" id="SSF51011">
    <property type="entry name" value="Glycosyl hydrolase domain"/>
    <property type="match status" value="1"/>
</dbReference>
<feature type="signal peptide" evidence="2">
    <location>
        <begin position="1"/>
        <end position="25"/>
    </location>
</feature>
<feature type="chain" id="PRO_0000012216" description="Alpha-L-arabinofuranosidase A">
    <location>
        <begin position="26"/>
        <end position="628"/>
    </location>
</feature>
<feature type="glycosylation site" description="N-linked (GlcNAc...) asparagine" evidence="1">
    <location>
        <position position="36"/>
    </location>
</feature>
<feature type="glycosylation site" description="N-linked (GlcNAc...) asparagine" evidence="1">
    <location>
        <position position="51"/>
    </location>
</feature>
<feature type="glycosylation site" description="N-linked (GlcNAc...) asparagine">
    <location>
        <position position="74"/>
    </location>
</feature>
<feature type="glycosylation site" description="N-linked (GlcNAc...) asparagine" evidence="1">
    <location>
        <position position="152"/>
    </location>
</feature>
<feature type="glycosylation site" description="N-linked (GlcNAc...) asparagine" evidence="1">
    <location>
        <position position="171"/>
    </location>
</feature>
<feature type="glycosylation site" description="N-linked (GlcNAc...) asparagine" evidence="1">
    <location>
        <position position="260"/>
    </location>
</feature>
<feature type="glycosylation site" description="N-linked (GlcNAc...) asparagine" evidence="1">
    <location>
        <position position="359"/>
    </location>
</feature>
<feature type="glycosylation site" description="N-linked (GlcNAc...) asparagine" evidence="1">
    <location>
        <position position="440"/>
    </location>
</feature>
<feature type="glycosylation site" description="N-linked (GlcNAc...) asparagine" evidence="1">
    <location>
        <position position="493"/>
    </location>
</feature>
<feature type="glycosylation site" description="N-linked (GlcNAc...) asparagine" evidence="1">
    <location>
        <position position="610"/>
    </location>
</feature>
<evidence type="ECO:0000255" key="1"/>
<evidence type="ECO:0000269" key="2">
    <source>
    </source>
</evidence>
<evidence type="ECO:0000305" key="3"/>
<organism>
    <name type="scientific">Aspergillus niger</name>
    <dbReference type="NCBI Taxonomy" id="5061"/>
    <lineage>
        <taxon>Eukaryota</taxon>
        <taxon>Fungi</taxon>
        <taxon>Dikarya</taxon>
        <taxon>Ascomycota</taxon>
        <taxon>Pezizomycotina</taxon>
        <taxon>Eurotiomycetes</taxon>
        <taxon>Eurotiomycetidae</taxon>
        <taxon>Eurotiales</taxon>
        <taxon>Aspergillaceae</taxon>
        <taxon>Aspergillus</taxon>
        <taxon>Aspergillus subgen. Circumdati</taxon>
    </lineage>
</organism>
<accession>P42254</accession>